<comment type="similarity">
    <text evidence="1">Belongs to the universal ribosomal protein uS9 family.</text>
</comment>
<proteinExistence type="inferred from homology"/>
<dbReference type="EMBL" id="CP000512">
    <property type="protein sequence ID" value="ABM34593.1"/>
    <property type="molecule type" value="Genomic_DNA"/>
</dbReference>
<dbReference type="RefSeq" id="WP_011797079.1">
    <property type="nucleotide sequence ID" value="NC_008752.1"/>
</dbReference>
<dbReference type="SMR" id="A1TUF5"/>
<dbReference type="STRING" id="397945.Aave_4052"/>
<dbReference type="GeneID" id="79789069"/>
<dbReference type="KEGG" id="aav:Aave_4052"/>
<dbReference type="eggNOG" id="COG0103">
    <property type="taxonomic scope" value="Bacteria"/>
</dbReference>
<dbReference type="HOGENOM" id="CLU_046483_2_1_4"/>
<dbReference type="OrthoDB" id="9803965at2"/>
<dbReference type="Proteomes" id="UP000002596">
    <property type="component" value="Chromosome"/>
</dbReference>
<dbReference type="GO" id="GO:0022627">
    <property type="term" value="C:cytosolic small ribosomal subunit"/>
    <property type="evidence" value="ECO:0007669"/>
    <property type="project" value="TreeGrafter"/>
</dbReference>
<dbReference type="GO" id="GO:0003723">
    <property type="term" value="F:RNA binding"/>
    <property type="evidence" value="ECO:0007669"/>
    <property type="project" value="TreeGrafter"/>
</dbReference>
<dbReference type="GO" id="GO:0003735">
    <property type="term" value="F:structural constituent of ribosome"/>
    <property type="evidence" value="ECO:0007669"/>
    <property type="project" value="InterPro"/>
</dbReference>
<dbReference type="GO" id="GO:0006412">
    <property type="term" value="P:translation"/>
    <property type="evidence" value="ECO:0007669"/>
    <property type="project" value="UniProtKB-UniRule"/>
</dbReference>
<dbReference type="FunFam" id="3.30.230.10:FF:000001">
    <property type="entry name" value="30S ribosomal protein S9"/>
    <property type="match status" value="1"/>
</dbReference>
<dbReference type="Gene3D" id="3.30.230.10">
    <property type="match status" value="1"/>
</dbReference>
<dbReference type="HAMAP" id="MF_00532_B">
    <property type="entry name" value="Ribosomal_uS9_B"/>
    <property type="match status" value="1"/>
</dbReference>
<dbReference type="InterPro" id="IPR020568">
    <property type="entry name" value="Ribosomal_Su5_D2-typ_SF"/>
</dbReference>
<dbReference type="InterPro" id="IPR000754">
    <property type="entry name" value="Ribosomal_uS9"/>
</dbReference>
<dbReference type="InterPro" id="IPR023035">
    <property type="entry name" value="Ribosomal_uS9_bac/plastid"/>
</dbReference>
<dbReference type="InterPro" id="IPR020574">
    <property type="entry name" value="Ribosomal_uS9_CS"/>
</dbReference>
<dbReference type="InterPro" id="IPR014721">
    <property type="entry name" value="Ribsml_uS5_D2-typ_fold_subgr"/>
</dbReference>
<dbReference type="NCBIfam" id="NF001099">
    <property type="entry name" value="PRK00132.1"/>
    <property type="match status" value="1"/>
</dbReference>
<dbReference type="PANTHER" id="PTHR21569">
    <property type="entry name" value="RIBOSOMAL PROTEIN S9"/>
    <property type="match status" value="1"/>
</dbReference>
<dbReference type="PANTHER" id="PTHR21569:SF1">
    <property type="entry name" value="SMALL RIBOSOMAL SUBUNIT PROTEIN US9M"/>
    <property type="match status" value="1"/>
</dbReference>
<dbReference type="Pfam" id="PF00380">
    <property type="entry name" value="Ribosomal_S9"/>
    <property type="match status" value="1"/>
</dbReference>
<dbReference type="SUPFAM" id="SSF54211">
    <property type="entry name" value="Ribosomal protein S5 domain 2-like"/>
    <property type="match status" value="1"/>
</dbReference>
<dbReference type="PROSITE" id="PS00360">
    <property type="entry name" value="RIBOSOMAL_S9"/>
    <property type="match status" value="1"/>
</dbReference>
<keyword id="KW-0687">Ribonucleoprotein</keyword>
<keyword id="KW-0689">Ribosomal protein</keyword>
<sequence>MIGEWNNGTGRRKSSVARVFLKKGSGKITVNGKDIQQYFGRETSIMIAKQPLVLTNHVETFDIQVNVHGGGESGQAGATRHGITRALIDYDATLKSALSQAGFVTRDAREVERKKVGLHSARRAKQFSKR</sequence>
<accession>A1TUF5</accession>
<name>RS9_PARC0</name>
<evidence type="ECO:0000255" key="1">
    <source>
        <dbReference type="HAMAP-Rule" id="MF_00532"/>
    </source>
</evidence>
<evidence type="ECO:0000305" key="2"/>
<protein>
    <recommendedName>
        <fullName evidence="1">Small ribosomal subunit protein uS9</fullName>
    </recommendedName>
    <alternativeName>
        <fullName evidence="2">30S ribosomal protein S9</fullName>
    </alternativeName>
</protein>
<feature type="chain" id="PRO_1000051147" description="Small ribosomal subunit protein uS9">
    <location>
        <begin position="1"/>
        <end position="130"/>
    </location>
</feature>
<organism>
    <name type="scientific">Paracidovorax citrulli (strain AAC00-1)</name>
    <name type="common">Acidovorax citrulli</name>
    <dbReference type="NCBI Taxonomy" id="397945"/>
    <lineage>
        <taxon>Bacteria</taxon>
        <taxon>Pseudomonadati</taxon>
        <taxon>Pseudomonadota</taxon>
        <taxon>Betaproteobacteria</taxon>
        <taxon>Burkholderiales</taxon>
        <taxon>Comamonadaceae</taxon>
        <taxon>Paracidovorax</taxon>
    </lineage>
</organism>
<gene>
    <name evidence="1" type="primary">rpsI</name>
    <name type="ordered locus">Aave_4052</name>
</gene>
<reference key="1">
    <citation type="submission" date="2006-12" db="EMBL/GenBank/DDBJ databases">
        <title>Complete sequence of Acidovorax avenae subsp. citrulli AAC00-1.</title>
        <authorList>
            <person name="Copeland A."/>
            <person name="Lucas S."/>
            <person name="Lapidus A."/>
            <person name="Barry K."/>
            <person name="Detter J.C."/>
            <person name="Glavina del Rio T."/>
            <person name="Dalin E."/>
            <person name="Tice H."/>
            <person name="Pitluck S."/>
            <person name="Kiss H."/>
            <person name="Brettin T."/>
            <person name="Bruce D."/>
            <person name="Han C."/>
            <person name="Tapia R."/>
            <person name="Gilna P."/>
            <person name="Schmutz J."/>
            <person name="Larimer F."/>
            <person name="Land M."/>
            <person name="Hauser L."/>
            <person name="Kyrpides N."/>
            <person name="Kim E."/>
            <person name="Stahl D."/>
            <person name="Richardson P."/>
        </authorList>
    </citation>
    <scope>NUCLEOTIDE SEQUENCE [LARGE SCALE GENOMIC DNA]</scope>
    <source>
        <strain>AAC00-1</strain>
    </source>
</reference>